<dbReference type="EC" id="2.4.1.207" evidence="6 7"/>
<dbReference type="EMBL" id="KC511053">
    <property type="protein sequence ID" value="AGT29356.1"/>
    <property type="molecule type" value="mRNA"/>
</dbReference>
<dbReference type="SMR" id="A0A067XRK9"/>
<dbReference type="GlyCosmos" id="A0A067XRK9">
    <property type="glycosylation" value="1 site, No reported glycans"/>
</dbReference>
<dbReference type="BRENDA" id="2.4.1.207">
    <property type="organism ID" value="7744"/>
</dbReference>
<dbReference type="BRENDA" id="3.2.1.151">
    <property type="organism ID" value="7744"/>
</dbReference>
<dbReference type="GO" id="GO:0048046">
    <property type="term" value="C:apoplast"/>
    <property type="evidence" value="ECO:0007669"/>
    <property type="project" value="UniProtKB-SubCell"/>
</dbReference>
<dbReference type="GO" id="GO:0004553">
    <property type="term" value="F:hydrolase activity, hydrolyzing O-glycosyl compounds"/>
    <property type="evidence" value="ECO:0007669"/>
    <property type="project" value="InterPro"/>
</dbReference>
<dbReference type="GO" id="GO:0016762">
    <property type="term" value="F:xyloglucan:xyloglucosyl transferase activity"/>
    <property type="evidence" value="ECO:0007669"/>
    <property type="project" value="UniProtKB-EC"/>
</dbReference>
<dbReference type="GO" id="GO:0042546">
    <property type="term" value="P:cell wall biogenesis"/>
    <property type="evidence" value="ECO:0007669"/>
    <property type="project" value="InterPro"/>
</dbReference>
<dbReference type="GO" id="GO:0071555">
    <property type="term" value="P:cell wall organization"/>
    <property type="evidence" value="ECO:0007669"/>
    <property type="project" value="UniProtKB-KW"/>
</dbReference>
<dbReference type="GO" id="GO:0009835">
    <property type="term" value="P:fruit ripening"/>
    <property type="evidence" value="ECO:0007669"/>
    <property type="project" value="UniProtKB-KW"/>
</dbReference>
<dbReference type="GO" id="GO:0010411">
    <property type="term" value="P:xyloglucan metabolic process"/>
    <property type="evidence" value="ECO:0007669"/>
    <property type="project" value="InterPro"/>
</dbReference>
<dbReference type="CDD" id="cd02176">
    <property type="entry name" value="GH16_XET"/>
    <property type="match status" value="1"/>
</dbReference>
<dbReference type="FunFam" id="2.60.120.200:FF:000025">
    <property type="entry name" value="Xyloglucan endotransglucosylase/hydrolase"/>
    <property type="match status" value="1"/>
</dbReference>
<dbReference type="Gene3D" id="2.60.120.200">
    <property type="match status" value="1"/>
</dbReference>
<dbReference type="InterPro" id="IPR044791">
    <property type="entry name" value="Beta-glucanase/XTH"/>
</dbReference>
<dbReference type="InterPro" id="IPR008264">
    <property type="entry name" value="Beta_glucanase"/>
</dbReference>
<dbReference type="InterPro" id="IPR013320">
    <property type="entry name" value="ConA-like_dom_sf"/>
</dbReference>
<dbReference type="InterPro" id="IPR000757">
    <property type="entry name" value="GH16"/>
</dbReference>
<dbReference type="InterPro" id="IPR010713">
    <property type="entry name" value="XET_C"/>
</dbReference>
<dbReference type="InterPro" id="IPR016455">
    <property type="entry name" value="XTH"/>
</dbReference>
<dbReference type="PANTHER" id="PTHR31062">
    <property type="entry name" value="XYLOGLUCAN ENDOTRANSGLUCOSYLASE/HYDROLASE PROTEIN 8-RELATED"/>
    <property type="match status" value="1"/>
</dbReference>
<dbReference type="Pfam" id="PF00722">
    <property type="entry name" value="Glyco_hydro_16"/>
    <property type="match status" value="1"/>
</dbReference>
<dbReference type="Pfam" id="PF06955">
    <property type="entry name" value="XET_C"/>
    <property type="match status" value="1"/>
</dbReference>
<dbReference type="PIRSF" id="PIRSF005604">
    <property type="entry name" value="XET"/>
    <property type="match status" value="1"/>
</dbReference>
<dbReference type="PRINTS" id="PR00737">
    <property type="entry name" value="GLHYDRLASE16"/>
</dbReference>
<dbReference type="SUPFAM" id="SSF49899">
    <property type="entry name" value="Concanavalin A-like lectins/glucanases"/>
    <property type="match status" value="1"/>
</dbReference>
<dbReference type="PROSITE" id="PS51762">
    <property type="entry name" value="GH16_2"/>
    <property type="match status" value="1"/>
</dbReference>
<accession>A0A067XRK9</accession>
<keyword id="KW-0052">Apoplast</keyword>
<keyword id="KW-0134">Cell wall</keyword>
<keyword id="KW-0961">Cell wall biogenesis/degradation</keyword>
<keyword id="KW-1015">Disulfide bond</keyword>
<keyword id="KW-0292">Fruit ripening</keyword>
<keyword id="KW-0325">Glycoprotein</keyword>
<keyword id="KW-0326">Glycosidase</keyword>
<keyword id="KW-0328">Glycosyltransferase</keyword>
<keyword id="KW-0378">Hydrolase</keyword>
<keyword id="KW-0964">Secreted</keyword>
<keyword id="KW-0732">Signal</keyword>
<keyword id="KW-0808">Transferase</keyword>
<comment type="function">
    <text evidence="7">Catalyzes xyloglucan endotransglycosylation (XET). Cleaves and religates xyloglucan polymers. Does not catalyze xyloglucan endohydrolysis (XEH). Probably involved in cell wall restructuring during postharvest fruit softening.</text>
</comment>
<comment type="catalytic activity">
    <reaction evidence="6 7">
        <text>breaks a beta-(1-&gt;4) bond in the backbone of a xyloglucan and transfers the xyloglucanyl segment on to O-4 of the non-reducing terminal glucose residue of an acceptor, which can be a xyloglucan or an oligosaccharide of xyloglucan.</text>
        <dbReference type="EC" id="2.4.1.207"/>
    </reaction>
</comment>
<comment type="biophysicochemical properties">
    <phDependence>
        <text evidence="7">Optimum pH is around 6. Highly active between pH range 4.5-6.5.</text>
    </phDependence>
</comment>
<comment type="subcellular location">
    <subcellularLocation>
        <location evidence="6 7">Secreted</location>
        <location evidence="6 7">Cell wall</location>
    </subcellularLocation>
    <subcellularLocation>
        <location evidence="6">Secreted</location>
        <location evidence="6">Extracellular space</location>
        <location evidence="6">Apoplast</location>
    </subcellularLocation>
</comment>
<comment type="tissue specificity">
    <text evidence="7">Highest expression in ripe leaves after full expansion. Also expressed in fruits, and at a lower level in flowers and stems (picked at anthesis).</text>
</comment>
<comment type="developmental stage">
    <text evidence="7">Expressed during fruit ripening. Expression in mature tissues, such as ripe leaves and fruits, is considerably higher than in fast growing tissues, such as young leaves and fruits. In fruits, expression increases rapidly during storage at 25 degees Celsius, and is highest on day 12 after which it decreases dramatically.</text>
</comment>
<comment type="induction">
    <text evidence="7">In fruits, up-regulated by abscisic acid (ABA) or by propylene treatment, and down-regulated by gibberellic acid (GA3) or by cold treatment during storage.</text>
</comment>
<comment type="PTM">
    <text evidence="6">Contains at least one intrachain disulfide bond essential for its enzymatic activity.</text>
</comment>
<comment type="similarity">
    <text evidence="9">Belongs to the glycosyl hydrolase 16 family. XTH group 1 subfamily.</text>
</comment>
<organism evidence="10">
    <name type="scientific">Diospyros kaki</name>
    <name type="common">Kaki persimmon</name>
    <name type="synonym">Diospyros chinensis</name>
    <dbReference type="NCBI Taxonomy" id="35925"/>
    <lineage>
        <taxon>Eukaryota</taxon>
        <taxon>Viridiplantae</taxon>
        <taxon>Streptophyta</taxon>
        <taxon>Embryophyta</taxon>
        <taxon>Tracheophyta</taxon>
        <taxon>Spermatophyta</taxon>
        <taxon>Magnoliopsida</taxon>
        <taxon>eudicotyledons</taxon>
        <taxon>Gunneridae</taxon>
        <taxon>Pentapetalae</taxon>
        <taxon>asterids</taxon>
        <taxon>Ericales</taxon>
        <taxon>Ebenaceae</taxon>
        <taxon>Diospyros</taxon>
    </lineage>
</organism>
<proteinExistence type="evidence at protein level"/>
<gene>
    <name evidence="8 10" type="primary">XTH6</name>
</gene>
<sequence length="299" mass="33764">MASSLTLPMAMAFTLLALSFASAMGGSMNSSRFDELFQPSWAFDHFVYEGEVLKMKLDNYSGAGFSSKGKYLFGKVTVQIKLVEGDSAGTVTAFYMSSDGTNHNEFDFEFLGNTTGEPYLVQTNVYVNGVGNREQRLNLWFDPTKDFHSYSLLWNQRQVVFMVDETPIRVHSNLEHRGIPFPKDQPMGVYSSIWNADDWATQGGRIKTDWSHAPFVASYQGFAIDACECPAAVAATDNARRCSSSAEKQFWWDMPTLSELSLHQSHQLIWVRANHLVYDYCTDTARFPVTPAECEHHRH</sequence>
<protein>
    <recommendedName>
        <fullName evidence="9">Xyloglucan endotransglucosylase protein 6</fullName>
        <shortName evidence="9">XET protein 6</shortName>
        <ecNumber evidence="6 7">2.4.1.207</ecNumber>
    </recommendedName>
    <alternativeName>
        <fullName evidence="8">DkXTH6</fullName>
    </alternativeName>
    <alternativeName>
        <fullName evidence="9">Xyloglucan endotransglucosylase/hydrolase protein 6</fullName>
        <shortName evidence="9">XTH protein 6</shortName>
    </alternativeName>
</protein>
<evidence type="ECO:0000250" key="1">
    <source>
        <dbReference type="UniProtKB" id="Q8GZD5"/>
    </source>
</evidence>
<evidence type="ECO:0000255" key="2">
    <source>
        <dbReference type="PIRSR" id="PIRSR005604-1"/>
    </source>
</evidence>
<evidence type="ECO:0000255" key="3">
    <source>
        <dbReference type="PIRSR" id="PIRSR005604-2"/>
    </source>
</evidence>
<evidence type="ECO:0000255" key="4">
    <source>
        <dbReference type="PROSITE-ProRule" id="PRU00498"/>
    </source>
</evidence>
<evidence type="ECO:0000255" key="5">
    <source>
        <dbReference type="PROSITE-ProRule" id="PRU01098"/>
    </source>
</evidence>
<evidence type="ECO:0000255" key="6">
    <source>
        <dbReference type="RuleBase" id="RU361120"/>
    </source>
</evidence>
<evidence type="ECO:0000269" key="7">
    <source>
    </source>
</evidence>
<evidence type="ECO:0000303" key="8">
    <source>
    </source>
</evidence>
<evidence type="ECO:0000305" key="9"/>
<evidence type="ECO:0000312" key="10">
    <source>
        <dbReference type="EMBL" id="AGT29356.1"/>
    </source>
</evidence>
<reference evidence="10" key="1">
    <citation type="journal article" date="2016" name="Front. Plant Sci.">
        <title>Isolation and Characterization of Two Persimmon Xyloglucan Endotransglycosylase/Hydrolase (XTH) Genes That Have Divergent Functions in Cell Wall Modification and Fruit Postharvest Softening.</title>
        <authorList>
            <person name="Han Y."/>
            <person name="Ban Q."/>
            <person name="Hou Y."/>
            <person name="Meng K."/>
            <person name="Suo J."/>
            <person name="Rao J."/>
        </authorList>
    </citation>
    <scope>NUCLEOTIDE SEQUENCE [MRNA]</scope>
    <scope>FUNCTION</scope>
    <scope>CATALYTIC ACTIVITY</scope>
    <scope>BIOPHYSICOCHEMICAL PROPERTIES</scope>
    <scope>SUBCELLULAR LOCATION</scope>
    <scope>TISSUE SPECIFICITY</scope>
    <scope>DEVELOPMENTAL STAGE</scope>
    <scope>INDUCTION</scope>
    <scope>PHYLOGENETIC ANALYSIS</scope>
    <source>
        <strain evidence="8">cv. Fuping Jianshi</strain>
        <tissue evidence="8">Fruit</tissue>
    </source>
</reference>
<name>XTH6_DIOKA</name>
<feature type="signal peptide" evidence="6">
    <location>
        <begin position="1"/>
        <end position="25"/>
    </location>
</feature>
<feature type="chain" id="PRO_5005103835" description="Xyloglucan endotransglucosylase protein 6" evidence="6">
    <location>
        <begin position="26"/>
        <end position="299"/>
    </location>
</feature>
<feature type="domain" description="GH16" evidence="5 9">
    <location>
        <begin position="26"/>
        <end position="219"/>
    </location>
</feature>
<feature type="active site" description="Nucleophile" evidence="2">
    <location>
        <position position="105"/>
    </location>
</feature>
<feature type="active site" description="Proton donor" evidence="2">
    <location>
        <position position="109"/>
    </location>
</feature>
<feature type="binding site" evidence="1">
    <location>
        <position position="109"/>
    </location>
    <ligand>
        <name>xyloglucan</name>
        <dbReference type="ChEBI" id="CHEBI:18233"/>
    </ligand>
</feature>
<feature type="binding site" evidence="1">
    <location>
        <begin position="122"/>
        <end position="124"/>
    </location>
    <ligand>
        <name>xyloglucan</name>
        <dbReference type="ChEBI" id="CHEBI:18233"/>
    </ligand>
</feature>
<feature type="binding site" evidence="1">
    <location>
        <begin position="132"/>
        <end position="134"/>
    </location>
    <ligand>
        <name>xyloglucan</name>
        <dbReference type="ChEBI" id="CHEBI:18233"/>
    </ligand>
</feature>
<feature type="binding site" evidence="1">
    <location>
        <begin position="198"/>
        <end position="199"/>
    </location>
    <ligand>
        <name>xyloglucan</name>
        <dbReference type="ChEBI" id="CHEBI:18233"/>
    </ligand>
</feature>
<feature type="binding site" evidence="1">
    <location>
        <position position="203"/>
    </location>
    <ligand>
        <name>xyloglucan</name>
        <dbReference type="ChEBI" id="CHEBI:18233"/>
    </ligand>
</feature>
<feature type="binding site" evidence="1">
    <location>
        <position position="286"/>
    </location>
    <ligand>
        <name>xyloglucan</name>
        <dbReference type="ChEBI" id="CHEBI:18233"/>
    </ligand>
</feature>
<feature type="site" description="Important for catalytic activity" evidence="1">
    <location>
        <position position="107"/>
    </location>
</feature>
<feature type="glycosylation site" description="N-linked (GlcNAc...) asparagine" evidence="3 4">
    <location>
        <position position="113"/>
    </location>
</feature>
<feature type="disulfide bond" evidence="1">
    <location>
        <begin position="227"/>
        <end position="242"/>
    </location>
</feature>
<feature type="disulfide bond" evidence="1">
    <location>
        <begin position="281"/>
        <end position="294"/>
    </location>
</feature>